<accession>B0KM20</accession>
<reference key="1">
    <citation type="submission" date="2008-01" db="EMBL/GenBank/DDBJ databases">
        <title>Complete sequence of Pseudomonas putida GB-1.</title>
        <authorList>
            <consortium name="US DOE Joint Genome Institute"/>
            <person name="Copeland A."/>
            <person name="Lucas S."/>
            <person name="Lapidus A."/>
            <person name="Barry K."/>
            <person name="Glavina del Rio T."/>
            <person name="Dalin E."/>
            <person name="Tice H."/>
            <person name="Pitluck S."/>
            <person name="Bruce D."/>
            <person name="Goodwin L."/>
            <person name="Chertkov O."/>
            <person name="Brettin T."/>
            <person name="Detter J.C."/>
            <person name="Han C."/>
            <person name="Kuske C.R."/>
            <person name="Schmutz J."/>
            <person name="Larimer F."/>
            <person name="Land M."/>
            <person name="Hauser L."/>
            <person name="Kyrpides N."/>
            <person name="Kim E."/>
            <person name="McCarthy J.K."/>
            <person name="Richardson P."/>
        </authorList>
    </citation>
    <scope>NUCLEOTIDE SEQUENCE [LARGE SCALE GENOMIC DNA]</scope>
    <source>
        <strain>GB-1</strain>
    </source>
</reference>
<name>Y5045_PSEPG</name>
<comment type="similarity">
    <text evidence="1">Belongs to the UPF0301 (AlgH) family.</text>
</comment>
<proteinExistence type="inferred from homology"/>
<evidence type="ECO:0000255" key="1">
    <source>
        <dbReference type="HAMAP-Rule" id="MF_00758"/>
    </source>
</evidence>
<protein>
    <recommendedName>
        <fullName evidence="1">UPF0301 protein PputGB1_5045</fullName>
    </recommendedName>
</protein>
<dbReference type="EMBL" id="CP000926">
    <property type="protein sequence ID" value="ABZ00930.1"/>
    <property type="molecule type" value="Genomic_DNA"/>
</dbReference>
<dbReference type="RefSeq" id="WP_012274555.1">
    <property type="nucleotide sequence ID" value="NC_010322.1"/>
</dbReference>
<dbReference type="SMR" id="B0KM20"/>
<dbReference type="KEGG" id="ppg:PputGB1_5045"/>
<dbReference type="eggNOG" id="COG1678">
    <property type="taxonomic scope" value="Bacteria"/>
</dbReference>
<dbReference type="HOGENOM" id="CLU_057596_1_0_6"/>
<dbReference type="Proteomes" id="UP000002157">
    <property type="component" value="Chromosome"/>
</dbReference>
<dbReference type="GO" id="GO:0005829">
    <property type="term" value="C:cytosol"/>
    <property type="evidence" value="ECO:0007669"/>
    <property type="project" value="TreeGrafter"/>
</dbReference>
<dbReference type="Gene3D" id="3.40.1740.10">
    <property type="entry name" value="VC0467-like"/>
    <property type="match status" value="1"/>
</dbReference>
<dbReference type="HAMAP" id="MF_00758">
    <property type="entry name" value="UPF0301"/>
    <property type="match status" value="1"/>
</dbReference>
<dbReference type="InterPro" id="IPR003774">
    <property type="entry name" value="AlgH-like"/>
</dbReference>
<dbReference type="NCBIfam" id="NF001266">
    <property type="entry name" value="PRK00228.1-1"/>
    <property type="match status" value="1"/>
</dbReference>
<dbReference type="PANTHER" id="PTHR30327">
    <property type="entry name" value="UNCHARACTERIZED PROTEIN YQGE"/>
    <property type="match status" value="1"/>
</dbReference>
<dbReference type="PANTHER" id="PTHR30327:SF1">
    <property type="entry name" value="UPF0301 PROTEIN YQGE"/>
    <property type="match status" value="1"/>
</dbReference>
<dbReference type="Pfam" id="PF02622">
    <property type="entry name" value="DUF179"/>
    <property type="match status" value="1"/>
</dbReference>
<dbReference type="SUPFAM" id="SSF143456">
    <property type="entry name" value="VC0467-like"/>
    <property type="match status" value="1"/>
</dbReference>
<sequence>MKTLAPSYLKHQFLIAMPHMADPNFAQTLTYIVEHNEHGAMGLVVNRPQELSLADILEQLRPDEMPPASTSQVPIYQGGPVQTDRGFVLHSSECSFQATVALEGLSLTTSQDVLLAIAAGVGPKQSLITLGYAGWEAGQLEAELADNAWLNCPFDPEIIFGMANDLRLEAAAASLGINLHLLTSQAGHA</sequence>
<organism>
    <name type="scientific">Pseudomonas putida (strain GB-1)</name>
    <dbReference type="NCBI Taxonomy" id="76869"/>
    <lineage>
        <taxon>Bacteria</taxon>
        <taxon>Pseudomonadati</taxon>
        <taxon>Pseudomonadota</taxon>
        <taxon>Gammaproteobacteria</taxon>
        <taxon>Pseudomonadales</taxon>
        <taxon>Pseudomonadaceae</taxon>
        <taxon>Pseudomonas</taxon>
    </lineage>
</organism>
<feature type="chain" id="PRO_1000083515" description="UPF0301 protein PputGB1_5045">
    <location>
        <begin position="1"/>
        <end position="189"/>
    </location>
</feature>
<gene>
    <name type="ordered locus">PputGB1_5045</name>
</gene>